<accession>P08250</accession>
<gene>
    <name type="primary">APOA1</name>
</gene>
<proteinExistence type="evidence at protein level"/>
<protein>
    <recommendedName>
        <fullName>Apolipoprotein A-I</fullName>
        <shortName>Apo-AI</shortName>
        <shortName>ApoA-I</shortName>
    </recommendedName>
    <alternativeName>
        <fullName>Apolipoprotein A1</fullName>
    </alternativeName>
    <component>
        <recommendedName>
            <fullName>Proapolipoprotein A-I</fullName>
            <shortName>ProapoA-I</shortName>
        </recommendedName>
    </component>
</protein>
<evidence type="ECO:0000250" key="1">
    <source>
        <dbReference type="UniProtKB" id="G5BQH5"/>
    </source>
</evidence>
<evidence type="ECO:0000305" key="2"/>
<organism>
    <name type="scientific">Gallus gallus</name>
    <name type="common">Chicken</name>
    <dbReference type="NCBI Taxonomy" id="9031"/>
    <lineage>
        <taxon>Eukaryota</taxon>
        <taxon>Metazoa</taxon>
        <taxon>Chordata</taxon>
        <taxon>Craniata</taxon>
        <taxon>Vertebrata</taxon>
        <taxon>Euteleostomi</taxon>
        <taxon>Archelosauria</taxon>
        <taxon>Archosauria</taxon>
        <taxon>Dinosauria</taxon>
        <taxon>Saurischia</taxon>
        <taxon>Theropoda</taxon>
        <taxon>Coelurosauria</taxon>
        <taxon>Aves</taxon>
        <taxon>Neognathae</taxon>
        <taxon>Galloanserae</taxon>
        <taxon>Galliformes</taxon>
        <taxon>Phasianidae</taxon>
        <taxon>Phasianinae</taxon>
        <taxon>Gallus</taxon>
    </lineage>
</organism>
<name>APOA1_CHICK</name>
<reference key="1">
    <citation type="journal article" date="1987" name="Biochem. Biophys. Res. Commun.">
        <title>Chicken apolipoprotein A-I: cDNA sequence, tissue expression and evolution.</title>
        <authorList>
            <person name="Byrnes L."/>
            <person name="Luo C.-C."/>
            <person name="Li W.-H."/>
            <person name="Yang C.-Y."/>
            <person name="Chan L."/>
        </authorList>
    </citation>
    <scope>NUCLEOTIDE SEQUENCE [MRNA]</scope>
</reference>
<reference key="2">
    <citation type="journal article" date="1987" name="Gene">
        <title>The complete sequence of chick apolipoprotein AI mRNA and its expression in the developing chick.</title>
        <authorList>
            <person name="Ferrari S."/>
            <person name="Tarugi P."/>
            <person name="Drusiani E."/>
            <person name="Calandra S."/>
            <person name="Fregni M."/>
        </authorList>
    </citation>
    <scope>NUCLEOTIDE SEQUENCE [MRNA]</scope>
</reference>
<reference key="3">
    <citation type="journal article" date="1987" name="J. Biol. Chem.">
        <title>Structure, evolution, and regulation of chicken apolipoprotein A-I.</title>
        <authorList>
            <person name="Rajavashisth T.B."/>
            <person name="Dawson P.A."/>
            <person name="Williams D.L."/>
            <person name="Shackelford J.E."/>
            <person name="Lebherz H."/>
            <person name="Lusis A.J."/>
        </authorList>
    </citation>
    <scope>NUCLEOTIDE SEQUENCE [MRNA]</scope>
</reference>
<reference key="4">
    <citation type="journal article" date="1992" name="J. Lipid Res.">
        <title>Evolutionary distinct mechanisms regulate apolipoprotein A-I gene expression: differences between avian and mammalian apoA-I gene transcription control regions.</title>
        <authorList>
            <person name="Lamon-Fava S."/>
            <person name="Sastry R."/>
            <person name="Ferrari S."/>
            <person name="Rajavashisth T.B."/>
            <person name="Lusis A.J."/>
            <person name="Karathanasis S.K."/>
        </authorList>
    </citation>
    <scope>NUCLEOTIDE SEQUENCE [GENOMIC DNA]</scope>
</reference>
<reference key="5">
    <citation type="journal article" date="1983" name="J. Biol. Chem.">
        <title>Synthesis and secretion of apolipoprotein A1 by chick breast muscle.</title>
        <authorList>
            <person name="Shackelford J.E."/>
            <person name="Lebherz H.G."/>
        </authorList>
    </citation>
    <scope>PROTEIN SEQUENCE OF 25-44</scope>
</reference>
<comment type="function">
    <text>Participates in the reverse transport of cholesterol from tissues to the liver for excretion by promoting cholesterol efflux from tissues and by acting as a cofactor for the lecithin cholesterol acyltransferase (LCAT).</text>
</comment>
<comment type="subunit">
    <text evidence="1">Homodimer.</text>
</comment>
<comment type="interaction">
    <interactant intactId="EBI-1635960">
        <id>P08250</id>
    </interactant>
    <interactant intactId="EBI-13636839">
        <id>Q9KH15</id>
        <label>pMGA1.2</label>
    </interactant>
    <organismsDiffer>true</organismsDiffer>
    <experiments>2</experiments>
</comment>
<comment type="subcellular location">
    <subcellularLocation>
        <location>Secreted</location>
    </subcellularLocation>
</comment>
<comment type="tissue specificity">
    <text>Major protein of plasma HDL, also found in chylomicrons.</text>
</comment>
<comment type="similarity">
    <text evidence="2">Belongs to the apolipoprotein A1/A4/E family.</text>
</comment>
<sequence length="264" mass="30680">MRGVLVTLAVLFLTGTQARSFWQHDEPQTPLDRIRDMVDVYLETVKASGKDAIAQFESSAVGKQLDLKLADNLDTLSAAAAKLREDMAPYYKEVREMWLKDTEALRAELTKDLEEVKEKIRPFLDQFSAKWTEELEQYRQRLTPVAQELKELTKQKVELMQAKLTPVAEEARDRLRGHVEELRKNLAPYSDELRQKLSQKLEEIREKGIPQASEYQAKVMEQLSNLREKMTPLVQEFRERLTPYAENLKNRLISFLDELQKSVA</sequence>
<feature type="signal peptide">
    <location>
        <begin position="1"/>
        <end position="18"/>
    </location>
</feature>
<feature type="chain" id="PRO_0000425341" description="Proapolipoprotein A-I">
    <location>
        <begin position="19"/>
        <end position="264"/>
    </location>
</feature>
<feature type="chain" id="PRO_0000001960" description="Apolipoprotein A-I">
    <location>
        <begin position="25"/>
        <end position="264"/>
    </location>
</feature>
<feature type="repeat" description="1">
    <location>
        <begin position="67"/>
        <end position="88"/>
    </location>
</feature>
<feature type="repeat" description="2">
    <location>
        <begin position="89"/>
        <end position="110"/>
    </location>
</feature>
<feature type="repeat" description="3; half-length">
    <location>
        <begin position="111"/>
        <end position="121"/>
    </location>
</feature>
<feature type="repeat" description="4">
    <location>
        <begin position="122"/>
        <end position="143"/>
    </location>
</feature>
<feature type="repeat" description="5">
    <location>
        <begin position="144"/>
        <end position="165"/>
    </location>
</feature>
<feature type="repeat" description="6">
    <location>
        <begin position="166"/>
        <end position="187"/>
    </location>
</feature>
<feature type="repeat" description="7">
    <location>
        <begin position="188"/>
        <end position="209"/>
    </location>
</feature>
<feature type="repeat" description="8">
    <location>
        <begin position="210"/>
        <end position="231"/>
    </location>
</feature>
<feature type="repeat" description="9; half-length">
    <location>
        <begin position="232"/>
        <end position="242"/>
    </location>
</feature>
<feature type="repeat" description="10">
    <location>
        <begin position="243"/>
        <end position="264"/>
    </location>
</feature>
<feature type="region of interest" description="10 X approximate tandem repeats">
    <location>
        <begin position="67"/>
        <end position="264"/>
    </location>
</feature>
<feature type="sequence conflict" description="In Ref. 3; AAA48592 and 4; AAA48597." evidence="2" ref="3 4">
    <original>T</original>
    <variation>I</variation>
    <location>
        <position position="16"/>
    </location>
</feature>
<feature type="sequence conflict" description="In Ref. 3; AAA48592." evidence="2" ref="3">
    <original>E</original>
    <variation>K</variation>
    <location>
        <position position="148"/>
    </location>
</feature>
<keyword id="KW-0153">Cholesterol metabolism</keyword>
<keyword id="KW-0903">Direct protein sequencing</keyword>
<keyword id="KW-0345">HDL</keyword>
<keyword id="KW-0443">Lipid metabolism</keyword>
<keyword id="KW-0445">Lipid transport</keyword>
<keyword id="KW-1185">Reference proteome</keyword>
<keyword id="KW-0677">Repeat</keyword>
<keyword id="KW-0964">Secreted</keyword>
<keyword id="KW-0732">Signal</keyword>
<keyword id="KW-0753">Steroid metabolism</keyword>
<keyword id="KW-1207">Sterol metabolism</keyword>
<keyword id="KW-0813">Transport</keyword>
<dbReference type="EMBL" id="M17961">
    <property type="protein sequence ID" value="AAA48593.1"/>
    <property type="molecule type" value="mRNA"/>
</dbReference>
<dbReference type="EMBL" id="M18746">
    <property type="protein sequence ID" value="AAA48594.1"/>
    <property type="molecule type" value="mRNA"/>
</dbReference>
<dbReference type="EMBL" id="M25559">
    <property type="protein sequence ID" value="AAA48592.1"/>
    <property type="molecule type" value="mRNA"/>
</dbReference>
<dbReference type="EMBL" id="M96012">
    <property type="protein sequence ID" value="AAA48597.1"/>
    <property type="molecule type" value="Genomic_DNA"/>
</dbReference>
<dbReference type="PIR" id="JH0471">
    <property type="entry name" value="LPCHA1"/>
</dbReference>
<dbReference type="RefSeq" id="NP_990856.1">
    <property type="nucleotide sequence ID" value="NM_205525.5"/>
</dbReference>
<dbReference type="SMR" id="P08250"/>
<dbReference type="BioGRID" id="676780">
    <property type="interactions" value="1"/>
</dbReference>
<dbReference type="FunCoup" id="P08250">
    <property type="interactions" value="80"/>
</dbReference>
<dbReference type="IntAct" id="P08250">
    <property type="interactions" value="2"/>
</dbReference>
<dbReference type="STRING" id="9031.ENSGALP00000011510"/>
<dbReference type="PaxDb" id="9031-ENSGALP00000011510"/>
<dbReference type="Ensembl" id="ENSGALT00010060476.1">
    <property type="protein sequence ID" value="ENSGALP00010037235.1"/>
    <property type="gene ID" value="ENSGALG00010024773.1"/>
</dbReference>
<dbReference type="GeneID" id="396536"/>
<dbReference type="KEGG" id="gga:396536"/>
<dbReference type="CTD" id="335"/>
<dbReference type="VEuPathDB" id="HostDB:geneid_396536"/>
<dbReference type="eggNOG" id="ENOG502S1XQ">
    <property type="taxonomic scope" value="Eukaryota"/>
</dbReference>
<dbReference type="GeneTree" id="ENSGT00950000182929"/>
<dbReference type="HOGENOM" id="CLU_058447_1_0_1"/>
<dbReference type="InParanoid" id="P08250"/>
<dbReference type="OMA" id="EYVAQFE"/>
<dbReference type="OrthoDB" id="8727817at2759"/>
<dbReference type="PhylomeDB" id="P08250"/>
<dbReference type="Reactome" id="R-GGA-114608">
    <property type="pathway name" value="Platelet degranulation"/>
</dbReference>
<dbReference type="Reactome" id="R-GGA-3000471">
    <property type="pathway name" value="Scavenging by Class B Receptors"/>
</dbReference>
<dbReference type="Reactome" id="R-GGA-3000480">
    <property type="pathway name" value="Scavenging by Class A Receptors"/>
</dbReference>
<dbReference type="Reactome" id="R-GGA-381426">
    <property type="pathway name" value="Regulation of Insulin-like Growth Factor (IGF) transport and uptake by Insulin-like Growth Factor Binding Proteins (IGFBPs)"/>
</dbReference>
<dbReference type="Reactome" id="R-GGA-8957275">
    <property type="pathway name" value="Post-translational protein phosphorylation"/>
</dbReference>
<dbReference type="Reactome" id="R-GGA-8963888">
    <property type="pathway name" value="Chylomicron assembly"/>
</dbReference>
<dbReference type="Reactome" id="R-GGA-8963896">
    <property type="pathway name" value="HDL assembly"/>
</dbReference>
<dbReference type="Reactome" id="R-GGA-8964011">
    <property type="pathway name" value="HDL clearance"/>
</dbReference>
<dbReference type="Reactome" id="R-GGA-8964058">
    <property type="pathway name" value="HDL remodeling"/>
</dbReference>
<dbReference type="Reactome" id="R-GGA-9707616">
    <property type="pathway name" value="Heme signaling"/>
</dbReference>
<dbReference type="Reactome" id="R-GGA-975634">
    <property type="pathway name" value="Retinoid metabolism and transport"/>
</dbReference>
<dbReference type="PRO" id="PR:P08250"/>
<dbReference type="Proteomes" id="UP000000539">
    <property type="component" value="Chromosome 24"/>
</dbReference>
<dbReference type="Bgee" id="ENSGALG00000007114">
    <property type="expression patterns" value="Expressed in ovary and 13 other cell types or tissues"/>
</dbReference>
<dbReference type="GO" id="GO:0042627">
    <property type="term" value="C:chylomicron"/>
    <property type="evidence" value="ECO:0000318"/>
    <property type="project" value="GO_Central"/>
</dbReference>
<dbReference type="GO" id="GO:0030139">
    <property type="term" value="C:endocytic vesicle"/>
    <property type="evidence" value="ECO:0007669"/>
    <property type="project" value="Ensembl"/>
</dbReference>
<dbReference type="GO" id="GO:0005615">
    <property type="term" value="C:extracellular space"/>
    <property type="evidence" value="ECO:0000314"/>
    <property type="project" value="AgBase"/>
</dbReference>
<dbReference type="GO" id="GO:1903561">
    <property type="term" value="C:extracellular vesicle"/>
    <property type="evidence" value="ECO:0000318"/>
    <property type="project" value="GO_Central"/>
</dbReference>
<dbReference type="GO" id="GO:0034364">
    <property type="term" value="C:high-density lipoprotein particle"/>
    <property type="evidence" value="ECO:0000318"/>
    <property type="project" value="GO_Central"/>
</dbReference>
<dbReference type="GO" id="GO:0034362">
    <property type="term" value="C:low-density lipoprotein particle"/>
    <property type="evidence" value="ECO:0000318"/>
    <property type="project" value="GO_Central"/>
</dbReference>
<dbReference type="GO" id="GO:0034366">
    <property type="term" value="C:spherical high-density lipoprotein particle"/>
    <property type="evidence" value="ECO:0007669"/>
    <property type="project" value="Ensembl"/>
</dbReference>
<dbReference type="GO" id="GO:0034361">
    <property type="term" value="C:very-low-density lipoprotein particle"/>
    <property type="evidence" value="ECO:0000318"/>
    <property type="project" value="GO_Central"/>
</dbReference>
<dbReference type="GO" id="GO:0001540">
    <property type="term" value="F:amyloid-beta binding"/>
    <property type="evidence" value="ECO:0007669"/>
    <property type="project" value="Ensembl"/>
</dbReference>
<dbReference type="GO" id="GO:0034191">
    <property type="term" value="F:apolipoprotein A-I receptor binding"/>
    <property type="evidence" value="ECO:0007669"/>
    <property type="project" value="Ensembl"/>
</dbReference>
<dbReference type="GO" id="GO:0045499">
    <property type="term" value="F:chemorepellent activity"/>
    <property type="evidence" value="ECO:0007669"/>
    <property type="project" value="Ensembl"/>
</dbReference>
<dbReference type="GO" id="GO:0015485">
    <property type="term" value="F:cholesterol binding"/>
    <property type="evidence" value="ECO:0007669"/>
    <property type="project" value="Ensembl"/>
</dbReference>
<dbReference type="GO" id="GO:0120020">
    <property type="term" value="F:cholesterol transfer activity"/>
    <property type="evidence" value="ECO:0000318"/>
    <property type="project" value="GO_Central"/>
</dbReference>
<dbReference type="GO" id="GO:0019899">
    <property type="term" value="F:enzyme binding"/>
    <property type="evidence" value="ECO:0007669"/>
    <property type="project" value="Ensembl"/>
</dbReference>
<dbReference type="GO" id="GO:0031072">
    <property type="term" value="F:heat shock protein binding"/>
    <property type="evidence" value="ECO:0007669"/>
    <property type="project" value="Ensembl"/>
</dbReference>
<dbReference type="GO" id="GO:0008035">
    <property type="term" value="F:high-density lipoprotein particle binding"/>
    <property type="evidence" value="ECO:0007669"/>
    <property type="project" value="Ensembl"/>
</dbReference>
<dbReference type="GO" id="GO:0070653">
    <property type="term" value="F:high-density lipoprotein particle receptor binding"/>
    <property type="evidence" value="ECO:0007669"/>
    <property type="project" value="Ensembl"/>
</dbReference>
<dbReference type="GO" id="GO:0060228">
    <property type="term" value="F:phosphatidylcholine-sterol O-acyltransferase activator activity"/>
    <property type="evidence" value="ECO:0000318"/>
    <property type="project" value="GO_Central"/>
</dbReference>
<dbReference type="GO" id="GO:0005543">
    <property type="term" value="F:phospholipid binding"/>
    <property type="evidence" value="ECO:0000318"/>
    <property type="project" value="GO_Central"/>
</dbReference>
<dbReference type="GO" id="GO:0042803">
    <property type="term" value="F:protein homodimerization activity"/>
    <property type="evidence" value="ECO:0000250"/>
    <property type="project" value="UniProtKB"/>
</dbReference>
<dbReference type="GO" id="GO:0055090">
    <property type="term" value="P:acylglycerol homeostasis"/>
    <property type="evidence" value="ECO:0000318"/>
    <property type="project" value="GO_Central"/>
</dbReference>
<dbReference type="GO" id="GO:0030325">
    <property type="term" value="P:adrenal gland development"/>
    <property type="evidence" value="ECO:0007669"/>
    <property type="project" value="Ensembl"/>
</dbReference>
<dbReference type="GO" id="GO:0034205">
    <property type="term" value="P:amyloid-beta formation"/>
    <property type="evidence" value="ECO:0007669"/>
    <property type="project" value="Ensembl"/>
</dbReference>
<dbReference type="GO" id="GO:0043534">
    <property type="term" value="P:blood vessel endothelial cell migration"/>
    <property type="evidence" value="ECO:0007669"/>
    <property type="project" value="Ensembl"/>
</dbReference>
<dbReference type="GO" id="GO:0071402">
    <property type="term" value="P:cellular response to lipoprotein particle stimulus"/>
    <property type="evidence" value="ECO:0007669"/>
    <property type="project" value="Ensembl"/>
</dbReference>
<dbReference type="GO" id="GO:0006695">
    <property type="term" value="P:cholesterol biosynthetic process"/>
    <property type="evidence" value="ECO:0007669"/>
    <property type="project" value="Ensembl"/>
</dbReference>
<dbReference type="GO" id="GO:0033344">
    <property type="term" value="P:cholesterol efflux"/>
    <property type="evidence" value="ECO:0000318"/>
    <property type="project" value="GO_Central"/>
</dbReference>
<dbReference type="GO" id="GO:0042632">
    <property type="term" value="P:cholesterol homeostasis"/>
    <property type="evidence" value="ECO:0007669"/>
    <property type="project" value="Ensembl"/>
</dbReference>
<dbReference type="GO" id="GO:0070508">
    <property type="term" value="P:cholesterol import"/>
    <property type="evidence" value="ECO:0007669"/>
    <property type="project" value="Ensembl"/>
</dbReference>
<dbReference type="GO" id="GO:0008203">
    <property type="term" value="P:cholesterol metabolic process"/>
    <property type="evidence" value="ECO:0000318"/>
    <property type="project" value="GO_Central"/>
</dbReference>
<dbReference type="GO" id="GO:0001935">
    <property type="term" value="P:endothelial cell proliferation"/>
    <property type="evidence" value="ECO:0007669"/>
    <property type="project" value="Ensembl"/>
</dbReference>
<dbReference type="GO" id="GO:0007186">
    <property type="term" value="P:G protein-coupled receptor signaling pathway"/>
    <property type="evidence" value="ECO:0007669"/>
    <property type="project" value="Ensembl"/>
</dbReference>
<dbReference type="GO" id="GO:0008211">
    <property type="term" value="P:glucocorticoid metabolic process"/>
    <property type="evidence" value="ECO:0007669"/>
    <property type="project" value="Ensembl"/>
</dbReference>
<dbReference type="GO" id="GO:0034380">
    <property type="term" value="P:high-density lipoprotein particle assembly"/>
    <property type="evidence" value="ECO:0007669"/>
    <property type="project" value="Ensembl"/>
</dbReference>
<dbReference type="GO" id="GO:0034375">
    <property type="term" value="P:high-density lipoprotein particle remodeling"/>
    <property type="evidence" value="ECO:0007669"/>
    <property type="project" value="Ensembl"/>
</dbReference>
<dbReference type="GO" id="GO:0007229">
    <property type="term" value="P:integrin-mediated signaling pathway"/>
    <property type="evidence" value="ECO:0007669"/>
    <property type="project" value="Ensembl"/>
</dbReference>
<dbReference type="GO" id="GO:0019915">
    <property type="term" value="P:lipid storage"/>
    <property type="evidence" value="ECO:0007669"/>
    <property type="project" value="Ensembl"/>
</dbReference>
<dbReference type="GO" id="GO:0042158">
    <property type="term" value="P:lipoprotein biosynthetic process"/>
    <property type="evidence" value="ECO:0007669"/>
    <property type="project" value="Ensembl"/>
</dbReference>
<dbReference type="GO" id="GO:0045445">
    <property type="term" value="P:myoblast differentiation"/>
    <property type="evidence" value="ECO:0000304"/>
    <property type="project" value="AgBase"/>
</dbReference>
<dbReference type="GO" id="GO:0060354">
    <property type="term" value="P:negative regulation of cell adhesion molecule production"/>
    <property type="evidence" value="ECO:0007669"/>
    <property type="project" value="Ensembl"/>
</dbReference>
<dbReference type="GO" id="GO:0002719">
    <property type="term" value="P:negative regulation of cytokine production involved in immune response"/>
    <property type="evidence" value="ECO:0007669"/>
    <property type="project" value="Ensembl"/>
</dbReference>
<dbReference type="GO" id="GO:0034115">
    <property type="term" value="P:negative regulation of heterotypic cell-cell adhesion"/>
    <property type="evidence" value="ECO:0007669"/>
    <property type="project" value="Ensembl"/>
</dbReference>
<dbReference type="GO" id="GO:0050728">
    <property type="term" value="P:negative regulation of inflammatory response"/>
    <property type="evidence" value="ECO:0007669"/>
    <property type="project" value="Ensembl"/>
</dbReference>
<dbReference type="GO" id="GO:0032691">
    <property type="term" value="P:negative regulation of interleukin-1 beta production"/>
    <property type="evidence" value="ECO:0007669"/>
    <property type="project" value="Ensembl"/>
</dbReference>
<dbReference type="GO" id="GO:1901247">
    <property type="term" value="P:negative regulation of lung ciliated cell differentiation"/>
    <property type="evidence" value="ECO:0000315"/>
    <property type="project" value="AgBase"/>
</dbReference>
<dbReference type="GO" id="GO:0010804">
    <property type="term" value="P:negative regulation of tumor necrosis factor-mediated signaling pathway"/>
    <property type="evidence" value="ECO:0007669"/>
    <property type="project" value="Ensembl"/>
</dbReference>
<dbReference type="GO" id="GO:0010903">
    <property type="term" value="P:negative regulation of very-low-density lipoprotein particle remodeling"/>
    <property type="evidence" value="ECO:0007669"/>
    <property type="project" value="Ensembl"/>
</dbReference>
<dbReference type="GO" id="GO:0006656">
    <property type="term" value="P:phosphatidylcholine biosynthetic process"/>
    <property type="evidence" value="ECO:0007669"/>
    <property type="project" value="Ensembl"/>
</dbReference>
<dbReference type="GO" id="GO:0033700">
    <property type="term" value="P:phospholipid efflux"/>
    <property type="evidence" value="ECO:0000318"/>
    <property type="project" value="GO_Central"/>
</dbReference>
<dbReference type="GO" id="GO:0055091">
    <property type="term" value="P:phospholipid homeostasis"/>
    <property type="evidence" value="ECO:0007669"/>
    <property type="project" value="Ensembl"/>
</dbReference>
<dbReference type="GO" id="GO:0010875">
    <property type="term" value="P:positive regulation of cholesterol efflux"/>
    <property type="evidence" value="ECO:0007669"/>
    <property type="project" value="Ensembl"/>
</dbReference>
<dbReference type="GO" id="GO:0090205">
    <property type="term" value="P:positive regulation of cholesterol metabolic process"/>
    <property type="evidence" value="ECO:0007669"/>
    <property type="project" value="Ensembl"/>
</dbReference>
<dbReference type="GO" id="GO:0050766">
    <property type="term" value="P:positive regulation of phagocytosis"/>
    <property type="evidence" value="ECO:0007669"/>
    <property type="project" value="Ensembl"/>
</dbReference>
<dbReference type="GO" id="GO:1902995">
    <property type="term" value="P:positive regulation of phospholipid efflux"/>
    <property type="evidence" value="ECO:0007669"/>
    <property type="project" value="Ensembl"/>
</dbReference>
<dbReference type="GO" id="GO:0035025">
    <property type="term" value="P:positive regulation of Rho protein signal transduction"/>
    <property type="evidence" value="ECO:0007669"/>
    <property type="project" value="Ensembl"/>
</dbReference>
<dbReference type="GO" id="GO:0051496">
    <property type="term" value="P:positive regulation of stress fiber assembly"/>
    <property type="evidence" value="ECO:0007669"/>
    <property type="project" value="Ensembl"/>
</dbReference>
<dbReference type="GO" id="GO:1900026">
    <property type="term" value="P:positive regulation of substrate adhesion-dependent cell spreading"/>
    <property type="evidence" value="ECO:0007669"/>
    <property type="project" value="Ensembl"/>
</dbReference>
<dbReference type="GO" id="GO:0050821">
    <property type="term" value="P:protein stabilization"/>
    <property type="evidence" value="ECO:0007669"/>
    <property type="project" value="Ensembl"/>
</dbReference>
<dbReference type="GO" id="GO:0032489">
    <property type="term" value="P:regulation of Cdc42 protein signal transduction"/>
    <property type="evidence" value="ECO:0007669"/>
    <property type="project" value="Ensembl"/>
</dbReference>
<dbReference type="GO" id="GO:0051726">
    <property type="term" value="P:regulation of cell cycle"/>
    <property type="evidence" value="ECO:0000315"/>
    <property type="project" value="AgBase"/>
</dbReference>
<dbReference type="GO" id="GO:0030300">
    <property type="term" value="P:regulation of intestinal cholesterol absorption"/>
    <property type="evidence" value="ECO:0007669"/>
    <property type="project" value="Ensembl"/>
</dbReference>
<dbReference type="GO" id="GO:0043691">
    <property type="term" value="P:reverse cholesterol transport"/>
    <property type="evidence" value="ECO:0007669"/>
    <property type="project" value="Ensembl"/>
</dbReference>
<dbReference type="GO" id="GO:0070328">
    <property type="term" value="P:triglyceride homeostasis"/>
    <property type="evidence" value="ECO:0007669"/>
    <property type="project" value="Ensembl"/>
</dbReference>
<dbReference type="GO" id="GO:0051180">
    <property type="term" value="P:vitamin transport"/>
    <property type="evidence" value="ECO:0007669"/>
    <property type="project" value="Ensembl"/>
</dbReference>
<dbReference type="FunFam" id="1.20.120.20:FF:000014">
    <property type="entry name" value="Apolipoprotein A-I"/>
    <property type="match status" value="1"/>
</dbReference>
<dbReference type="FunFam" id="1.20.5.20:FF:000001">
    <property type="entry name" value="apolipoprotein A-I"/>
    <property type="match status" value="1"/>
</dbReference>
<dbReference type="Gene3D" id="1.20.5.20">
    <property type="match status" value="1"/>
</dbReference>
<dbReference type="Gene3D" id="6.10.140.380">
    <property type="match status" value="1"/>
</dbReference>
<dbReference type="Gene3D" id="1.20.120.20">
    <property type="entry name" value="Apolipoprotein"/>
    <property type="match status" value="1"/>
</dbReference>
<dbReference type="InterPro" id="IPR000074">
    <property type="entry name" value="ApoA_E"/>
</dbReference>
<dbReference type="InterPro" id="IPR050163">
    <property type="entry name" value="Apolipoprotein_A1/A4/E"/>
</dbReference>
<dbReference type="PANTHER" id="PTHR18976">
    <property type="entry name" value="APOLIPOPROTEIN"/>
    <property type="match status" value="1"/>
</dbReference>
<dbReference type="PANTHER" id="PTHR18976:SF11">
    <property type="entry name" value="APOLIPOPROTEIN A-I"/>
    <property type="match status" value="1"/>
</dbReference>
<dbReference type="Pfam" id="PF01442">
    <property type="entry name" value="Apolipoprotein"/>
    <property type="match status" value="1"/>
</dbReference>
<dbReference type="SUPFAM" id="SSF58113">
    <property type="entry name" value="Apolipoprotein A-I"/>
    <property type="match status" value="1"/>
</dbReference>